<proteinExistence type="evidence at protein level"/>
<dbReference type="EC" id="2.1.2.5" evidence="8"/>
<dbReference type="EC" id="4.3.1.4" evidence="8"/>
<dbReference type="EMBL" id="AF079233">
    <property type="protein sequence ID" value="AAC28849.3"/>
    <property type="molecule type" value="mRNA"/>
</dbReference>
<dbReference type="EMBL" id="BC091134">
    <property type="protein sequence ID" value="AAH91134.1"/>
    <property type="molecule type" value="mRNA"/>
</dbReference>
<dbReference type="RefSeq" id="NP_446019.1">
    <property type="nucleotide sequence ID" value="NM_053567.2"/>
</dbReference>
<dbReference type="PDB" id="1TT9">
    <property type="method" value="X-ray"/>
    <property type="resolution" value="3.42 A"/>
    <property type="chains" value="A/B/C/D=1-541"/>
</dbReference>
<dbReference type="PDB" id="2PFD">
    <property type="method" value="X-ray"/>
    <property type="resolution" value="3.42 A"/>
    <property type="chains" value="A/B/C/D=1-541"/>
</dbReference>
<dbReference type="PDBsum" id="1TT9"/>
<dbReference type="PDBsum" id="2PFD"/>
<dbReference type="SMR" id="O88618"/>
<dbReference type="FunCoup" id="O88618">
    <property type="interactions" value="39"/>
</dbReference>
<dbReference type="STRING" id="10116.ENSRNOP00000001699"/>
<dbReference type="iPTMnet" id="O88618"/>
<dbReference type="PhosphoSitePlus" id="O88618"/>
<dbReference type="PaxDb" id="10116-ENSRNOP00000001699"/>
<dbReference type="Ensembl" id="ENSRNOT00000001699.7">
    <property type="protein sequence ID" value="ENSRNOP00000001699.3"/>
    <property type="gene ID" value="ENSRNOG00000001261.7"/>
</dbReference>
<dbReference type="GeneID" id="89833"/>
<dbReference type="KEGG" id="rno:89833"/>
<dbReference type="UCSC" id="RGD:70915">
    <property type="organism name" value="rat"/>
</dbReference>
<dbReference type="AGR" id="RGD:70915"/>
<dbReference type="CTD" id="10841"/>
<dbReference type="RGD" id="70915">
    <property type="gene designation" value="Ftcd"/>
</dbReference>
<dbReference type="eggNOG" id="ENOG502QQBY">
    <property type="taxonomic scope" value="Eukaryota"/>
</dbReference>
<dbReference type="GeneTree" id="ENSGT00390000005581"/>
<dbReference type="HOGENOM" id="CLU_040037_1_0_1"/>
<dbReference type="InParanoid" id="O88618"/>
<dbReference type="OMA" id="TYGKRQW"/>
<dbReference type="OrthoDB" id="48036at2759"/>
<dbReference type="PhylomeDB" id="O88618"/>
<dbReference type="TreeFam" id="TF333892"/>
<dbReference type="BRENDA" id="2.1.2.5">
    <property type="organism ID" value="5301"/>
</dbReference>
<dbReference type="BRENDA" id="4.3.1.4">
    <property type="organism ID" value="5301"/>
</dbReference>
<dbReference type="Reactome" id="R-RNO-70921">
    <property type="pathway name" value="Histidine catabolism"/>
</dbReference>
<dbReference type="UniPathway" id="UPA00379">
    <property type="reaction ID" value="UER00555"/>
</dbReference>
<dbReference type="EvolutionaryTrace" id="O88618"/>
<dbReference type="PRO" id="PR:O88618"/>
<dbReference type="Proteomes" id="UP000002494">
    <property type="component" value="Chromosome 20"/>
</dbReference>
<dbReference type="Bgee" id="ENSRNOG00000001261">
    <property type="expression patterns" value="Expressed in liver and 8 other cell types or tissues"/>
</dbReference>
<dbReference type="GO" id="GO:0005814">
    <property type="term" value="C:centriole"/>
    <property type="evidence" value="ECO:0007669"/>
    <property type="project" value="UniProtKB-SubCell"/>
</dbReference>
<dbReference type="GO" id="GO:0005829">
    <property type="term" value="C:cytosol"/>
    <property type="evidence" value="ECO:0000266"/>
    <property type="project" value="RGD"/>
</dbReference>
<dbReference type="GO" id="GO:0005783">
    <property type="term" value="C:endoplasmic reticulum"/>
    <property type="evidence" value="ECO:0000314"/>
    <property type="project" value="BHF-UCL"/>
</dbReference>
<dbReference type="GO" id="GO:0005793">
    <property type="term" value="C:endoplasmic reticulum-Golgi intermediate compartment"/>
    <property type="evidence" value="ECO:0000314"/>
    <property type="project" value="BHF-UCL"/>
</dbReference>
<dbReference type="GO" id="GO:0005794">
    <property type="term" value="C:Golgi apparatus"/>
    <property type="evidence" value="ECO:0000266"/>
    <property type="project" value="RGD"/>
</dbReference>
<dbReference type="GO" id="GO:0000139">
    <property type="term" value="C:Golgi membrane"/>
    <property type="evidence" value="ECO:0000314"/>
    <property type="project" value="BHF-UCL"/>
</dbReference>
<dbReference type="GO" id="GO:0005886">
    <property type="term" value="C:plasma membrane"/>
    <property type="evidence" value="ECO:0007669"/>
    <property type="project" value="Ensembl"/>
</dbReference>
<dbReference type="GO" id="GO:0030868">
    <property type="term" value="C:smooth endoplasmic reticulum membrane"/>
    <property type="evidence" value="ECO:0000266"/>
    <property type="project" value="RGD"/>
</dbReference>
<dbReference type="GO" id="GO:0005542">
    <property type="term" value="F:folic acid binding"/>
    <property type="evidence" value="ECO:0007669"/>
    <property type="project" value="UniProtKB-KW"/>
</dbReference>
<dbReference type="GO" id="GO:0030412">
    <property type="term" value="F:formimidoyltetrahydrofolate cyclodeaminase activity"/>
    <property type="evidence" value="ECO:0000314"/>
    <property type="project" value="BHF-UCL"/>
</dbReference>
<dbReference type="GO" id="GO:0030409">
    <property type="term" value="F:glutamate formimidoyltransferase activity"/>
    <property type="evidence" value="ECO:0000314"/>
    <property type="project" value="BHF-UCL"/>
</dbReference>
<dbReference type="GO" id="GO:0019215">
    <property type="term" value="F:intermediate filament binding"/>
    <property type="evidence" value="ECO:0000304"/>
    <property type="project" value="RGD"/>
</dbReference>
<dbReference type="GO" id="GO:0008017">
    <property type="term" value="F:microtubule binding"/>
    <property type="evidence" value="ECO:0000314"/>
    <property type="project" value="BHF-UCL"/>
</dbReference>
<dbReference type="GO" id="GO:0007010">
    <property type="term" value="P:cytoskeleton organization"/>
    <property type="evidence" value="ECO:0000315"/>
    <property type="project" value="RGD"/>
</dbReference>
<dbReference type="GO" id="GO:0019556">
    <property type="term" value="P:L-histidine catabolic process to glutamate and formamide"/>
    <property type="evidence" value="ECO:0007669"/>
    <property type="project" value="UniProtKB-UniPathway"/>
</dbReference>
<dbReference type="GO" id="GO:0019557">
    <property type="term" value="P:L-histidine catabolic process to glutamate and formate"/>
    <property type="evidence" value="ECO:0007669"/>
    <property type="project" value="UniProtKB-UniPathway"/>
</dbReference>
<dbReference type="FunFam" id="1.20.120.680:FF:000001">
    <property type="entry name" value="Formimidoyltransferase cyclodeaminase"/>
    <property type="match status" value="1"/>
</dbReference>
<dbReference type="FunFam" id="3.30.70.670:FF:000001">
    <property type="entry name" value="Formimidoyltransferase cyclodeaminase"/>
    <property type="match status" value="1"/>
</dbReference>
<dbReference type="FunFam" id="3.30.990.10:FF:000001">
    <property type="entry name" value="Formimidoyltransferase cyclodeaminase"/>
    <property type="match status" value="1"/>
</dbReference>
<dbReference type="Gene3D" id="1.20.120.680">
    <property type="entry name" value="Formiminotetrahydrofolate cyclodeaminase monomer, up-and-down helical bundle"/>
    <property type="match status" value="1"/>
</dbReference>
<dbReference type="Gene3D" id="3.30.70.670">
    <property type="entry name" value="Formiminotransferase, C-terminal subdomain"/>
    <property type="match status" value="1"/>
</dbReference>
<dbReference type="Gene3D" id="3.30.990.10">
    <property type="entry name" value="Formiminotransferase, N-terminal subdomain"/>
    <property type="match status" value="1"/>
</dbReference>
<dbReference type="InterPro" id="IPR007044">
    <property type="entry name" value="Cyclodeamin/CycHdrlase"/>
</dbReference>
<dbReference type="InterPro" id="IPR013802">
    <property type="entry name" value="Formiminotransferase_C"/>
</dbReference>
<dbReference type="InterPro" id="IPR037070">
    <property type="entry name" value="Formiminotransferase_C_sf"/>
</dbReference>
<dbReference type="InterPro" id="IPR004227">
    <property type="entry name" value="Formiminotransferase_cat"/>
</dbReference>
<dbReference type="InterPro" id="IPR012886">
    <property type="entry name" value="Formiminotransferase_N"/>
</dbReference>
<dbReference type="InterPro" id="IPR037064">
    <property type="entry name" value="Formiminotransferase_N_sf"/>
</dbReference>
<dbReference type="InterPro" id="IPR022384">
    <property type="entry name" value="FormiminoTrfase_cat_dom_sf"/>
</dbReference>
<dbReference type="InterPro" id="IPR036178">
    <property type="entry name" value="Formintransfe-cycloase-like_sf"/>
</dbReference>
<dbReference type="InterPro" id="IPR051623">
    <property type="entry name" value="FTCD"/>
</dbReference>
<dbReference type="NCBIfam" id="TIGR02024">
    <property type="entry name" value="FtcD"/>
    <property type="match status" value="1"/>
</dbReference>
<dbReference type="PANTHER" id="PTHR12234:SF0">
    <property type="entry name" value="FORMIMIDOYLTRANSFERASE-CYCLODEAMINASE"/>
    <property type="match status" value="1"/>
</dbReference>
<dbReference type="PANTHER" id="PTHR12234">
    <property type="entry name" value="FORMIMINOTRANSFERASE-CYCLODEAMINASE"/>
    <property type="match status" value="1"/>
</dbReference>
<dbReference type="Pfam" id="PF02971">
    <property type="entry name" value="FTCD"/>
    <property type="match status" value="1"/>
</dbReference>
<dbReference type="Pfam" id="PF04961">
    <property type="entry name" value="FTCD_C"/>
    <property type="match status" value="1"/>
</dbReference>
<dbReference type="Pfam" id="PF07837">
    <property type="entry name" value="FTCD_N"/>
    <property type="match status" value="1"/>
</dbReference>
<dbReference type="SMART" id="SM01221">
    <property type="entry name" value="FTCD"/>
    <property type="match status" value="1"/>
</dbReference>
<dbReference type="SMART" id="SM01222">
    <property type="entry name" value="FTCD_N"/>
    <property type="match status" value="1"/>
</dbReference>
<dbReference type="SUPFAM" id="SSF55116">
    <property type="entry name" value="Formiminotransferase domain of formiminotransferase-cyclodeaminase"/>
    <property type="match status" value="2"/>
</dbReference>
<dbReference type="SUPFAM" id="SSF101262">
    <property type="entry name" value="Methenyltetrahydrofolate cyclohydrolase-like"/>
    <property type="match status" value="1"/>
</dbReference>
<accession>O88618</accession>
<accession>Q5BKB7</accession>
<organism>
    <name type="scientific">Rattus norvegicus</name>
    <name type="common">Rat</name>
    <dbReference type="NCBI Taxonomy" id="10116"/>
    <lineage>
        <taxon>Eukaryota</taxon>
        <taxon>Metazoa</taxon>
        <taxon>Chordata</taxon>
        <taxon>Craniata</taxon>
        <taxon>Vertebrata</taxon>
        <taxon>Euteleostomi</taxon>
        <taxon>Mammalia</taxon>
        <taxon>Eutheria</taxon>
        <taxon>Euarchontoglires</taxon>
        <taxon>Glires</taxon>
        <taxon>Rodentia</taxon>
        <taxon>Myomorpha</taxon>
        <taxon>Muroidea</taxon>
        <taxon>Muridae</taxon>
        <taxon>Murinae</taxon>
        <taxon>Rattus</taxon>
    </lineage>
</organism>
<gene>
    <name type="primary">Ftcd</name>
</gene>
<name>FTCD_RAT</name>
<reference key="1">
    <citation type="submission" date="2001-06" db="EMBL/GenBank/DDBJ databases">
        <authorList>
            <person name="Gao Y.-S."/>
            <person name="Sztul E."/>
        </authorList>
    </citation>
    <scope>NUCLEOTIDE SEQUENCE [MRNA]</scope>
    <scope>SEQUENCE REVISION TO 257</scope>
    <source>
        <strain>Sprague-Dawley</strain>
        <tissue>Liver</tissue>
    </source>
</reference>
<reference key="2">
    <citation type="journal article" date="2004" name="Genome Res.">
        <title>The status, quality, and expansion of the NIH full-length cDNA project: the Mammalian Gene Collection (MGC).</title>
        <authorList>
            <consortium name="The MGC Project Team"/>
        </authorList>
    </citation>
    <scope>NUCLEOTIDE SEQUENCE [LARGE SCALE MRNA]</scope>
    <source>
        <tissue>Liver</tissue>
    </source>
</reference>
<reference key="3">
    <citation type="journal article" date="1998" name="J. Biol. Chem.">
        <title>Molecular cloning, characterization, and dynamics of rat formiminotransferase cyclodeaminase, a Golgi-associated 58-kDa protein.</title>
        <authorList>
            <person name="Gao Y.-S."/>
            <person name="Alvarez C."/>
            <person name="Nelson D.S."/>
            <person name="Sztul E."/>
        </authorList>
    </citation>
    <scope>NUCLEOTIDE SEQUENCE [MRNA] OF 1-48; 88-179 AND 223-285</scope>
    <source>
        <strain>Sprague-Dawley</strain>
        <tissue>Liver</tissue>
    </source>
</reference>
<reference key="4">
    <citation type="journal article" date="1998" name="J. Biol. Chem.">
        <title>58K, a microtubule-binding Golgi protein, is a formiminotransferase cyclodeaminase.</title>
        <authorList>
            <person name="Bashour A.-M."/>
            <person name="Bloom G.S."/>
        </authorList>
    </citation>
    <scope>PROTEIN SEQUENCE OF 48-65; 115-136; 156-165; 257-268; 291-299; 307-318; 321-341 AND 394-413</scope>
    <scope>FUNCTION</scope>
    <scope>CATALYTIC ACTIVITY</scope>
    <scope>PATHWAY</scope>
    <scope>SUBCELLULAR LOCATION</scope>
    <scope>TISSUE SPECIFICITY</scope>
    <source>
        <tissue>Liver</tissue>
    </source>
</reference>
<reference key="5">
    <citation type="journal article" date="2002" name="Eur. J. Cell Biol.">
        <title>A novel type of regulation of the vimentin intermediate filament cytoskeleton by a Golgi protein.</title>
        <authorList>
            <person name="Gao Y.S."/>
            <person name="Vrielink A."/>
            <person name="MacKenzie R."/>
            <person name="Sztul E."/>
        </authorList>
    </citation>
    <scope>FUNCTION</scope>
    <scope>SUBCELLULAR LOCATION</scope>
</reference>
<reference key="6">
    <citation type="journal article" date="2012" name="Nat. Commun.">
        <title>Quantitative maps of protein phosphorylation sites across 14 different rat organs and tissues.</title>
        <authorList>
            <person name="Lundby A."/>
            <person name="Secher A."/>
            <person name="Lage K."/>
            <person name="Nordsborg N.B."/>
            <person name="Dmytriyev A."/>
            <person name="Lundby C."/>
            <person name="Olsen J.V."/>
        </authorList>
    </citation>
    <scope>PHOSPHORYLATION [LARGE SCALE ANALYSIS] AT SER-520</scope>
    <scope>IDENTIFICATION BY MASS SPECTROMETRY [LARGE SCALE ANALYSIS]</scope>
</reference>
<reference key="7">
    <citation type="journal article" date="2004" name="EMBO J.">
        <title>Structure of the bifunctional and Golgi-associated formiminotransferase cyclodeaminase octamer.</title>
        <authorList>
            <person name="Mao Y."/>
            <person name="Vyas N.K."/>
            <person name="Vyas M.N."/>
            <person name="Chen D.H."/>
            <person name="Ludtke S.J."/>
            <person name="Chiu W."/>
            <person name="Quiocho F.A."/>
        </authorList>
    </citation>
    <scope>X-RAY CRYSTALLOGRAPHY (3.42 ANGSTROMS)</scope>
    <scope>SUBUNIT</scope>
    <scope>ACTIVE SITE FOR CYCLODEAMINASE ACTIVITY</scope>
</reference>
<reference key="8">
    <citation type="journal article" date="2007" name="Proc. Natl. Acad. Sci. U.S.A.">
        <title>Normal mode refinement of anisotropic thermal parameters for a supramolecular complex at 3.42-A crystallographic resolution.</title>
        <authorList>
            <person name="Poon B.K."/>
            <person name="Chen X."/>
            <person name="Lu M."/>
            <person name="Vyas N.K."/>
            <person name="Quiocho F.A."/>
            <person name="Wang Q."/>
            <person name="Ma J."/>
        </authorList>
    </citation>
    <scope>X-RAY CRYSTALLOGRAPHY (3.42 ANGSTROMS)</scope>
    <scope>SUBUNIT</scope>
</reference>
<feature type="chain" id="PRO_0000087362" description="Formimidoyltransferase-cyclodeaminase">
    <location>
        <begin position="1"/>
        <end position="541"/>
    </location>
</feature>
<feature type="region of interest" description="Formiminotransferase N-subdomain">
    <location>
        <begin position="1"/>
        <end position="181"/>
    </location>
</feature>
<feature type="region of interest" description="Formiminotransferase C-subdomain">
    <location>
        <begin position="182"/>
        <end position="326"/>
    </location>
</feature>
<feature type="region of interest" description="Linker">
    <location>
        <begin position="327"/>
        <end position="334"/>
    </location>
</feature>
<feature type="region of interest" description="Cyclodeaminase/cyclohydrolase">
    <location>
        <begin position="335"/>
        <end position="541"/>
    </location>
</feature>
<feature type="active site" description="For formimidoyltransferase activity" evidence="1">
    <location>
        <position position="82"/>
    </location>
</feature>
<feature type="active site" description="For cyclodeaminase activity" evidence="10">
    <location>
        <position position="412"/>
    </location>
</feature>
<feature type="binding site" evidence="4">
    <location>
        <begin position="163"/>
        <end position="172"/>
    </location>
    <ligand>
        <name>folate</name>
        <dbReference type="ChEBI" id="CHEBI:62501"/>
    </ligand>
</feature>
<feature type="modified residue" description="Phosphoserine" evidence="12">
    <location>
        <position position="520"/>
    </location>
</feature>
<feature type="strand" evidence="13">
    <location>
        <begin position="4"/>
        <end position="7"/>
    </location>
</feature>
<feature type="helix" evidence="13">
    <location>
        <begin position="17"/>
        <end position="26"/>
    </location>
</feature>
<feature type="turn" evidence="13">
    <location>
        <begin position="27"/>
        <end position="29"/>
    </location>
</feature>
<feature type="strand" evidence="13">
    <location>
        <begin position="33"/>
        <end position="41"/>
    </location>
</feature>
<feature type="turn" evidence="13">
    <location>
        <begin position="42"/>
        <end position="45"/>
    </location>
</feature>
<feature type="strand" evidence="13">
    <location>
        <begin position="46"/>
        <end position="53"/>
    </location>
</feature>
<feature type="helix" evidence="13">
    <location>
        <begin position="55"/>
        <end position="70"/>
    </location>
</feature>
<feature type="helix" evidence="13">
    <location>
        <begin position="75"/>
        <end position="77"/>
    </location>
</feature>
<feature type="strand" evidence="13">
    <location>
        <begin position="86"/>
        <end position="88"/>
    </location>
</feature>
<feature type="strand" evidence="13">
    <location>
        <begin position="90"/>
        <end position="98"/>
    </location>
</feature>
<feature type="helix" evidence="13">
    <location>
        <begin position="101"/>
        <end position="119"/>
    </location>
</feature>
<feature type="strand" evidence="13">
    <location>
        <begin position="123"/>
        <end position="127"/>
    </location>
</feature>
<feature type="strand" evidence="13">
    <location>
        <begin position="135"/>
        <end position="137"/>
    </location>
</feature>
<feature type="helix" evidence="13">
    <location>
        <begin position="138"/>
        <end position="141"/>
    </location>
</feature>
<feature type="helix" evidence="13">
    <location>
        <begin position="149"/>
        <end position="152"/>
    </location>
</feature>
<feature type="strand" evidence="13">
    <location>
        <begin position="156"/>
        <end position="158"/>
    </location>
</feature>
<feature type="strand" evidence="13">
    <location>
        <begin position="161"/>
        <end position="163"/>
    </location>
</feature>
<feature type="strand" evidence="13">
    <location>
        <begin position="174"/>
        <end position="178"/>
    </location>
</feature>
<feature type="strand" evidence="13">
    <location>
        <begin position="183"/>
        <end position="191"/>
    </location>
</feature>
<feature type="helix" evidence="13">
    <location>
        <begin position="193"/>
        <end position="203"/>
    </location>
</feature>
<feature type="strand" evidence="13">
    <location>
        <begin position="208"/>
        <end position="212"/>
    </location>
</feature>
<feature type="strand" evidence="13">
    <location>
        <begin position="219"/>
        <end position="226"/>
    </location>
</feature>
<feature type="turn" evidence="13">
    <location>
        <begin position="227"/>
        <end position="230"/>
    </location>
</feature>
<feature type="strand" evidence="13">
    <location>
        <begin position="231"/>
        <end position="239"/>
    </location>
</feature>
<feature type="turn" evidence="13">
    <location>
        <begin position="241"/>
        <end position="243"/>
    </location>
</feature>
<feature type="helix" evidence="13">
    <location>
        <begin position="246"/>
        <end position="258"/>
    </location>
</feature>
<feature type="turn" evidence="13">
    <location>
        <begin position="259"/>
        <end position="261"/>
    </location>
</feature>
<feature type="strand" evidence="13">
    <location>
        <begin position="264"/>
        <end position="271"/>
    </location>
</feature>
<feature type="helix" evidence="13">
    <location>
        <begin position="275"/>
        <end position="289"/>
    </location>
</feature>
<feature type="helix" evidence="13">
    <location>
        <begin position="296"/>
        <end position="305"/>
    </location>
</feature>
<feature type="strand" evidence="13">
    <location>
        <begin position="310"/>
        <end position="313"/>
    </location>
</feature>
<feature type="helix" evidence="13">
    <location>
        <begin position="317"/>
        <end position="320"/>
    </location>
</feature>
<feature type="helix" evidence="13">
    <location>
        <begin position="322"/>
        <end position="325"/>
    </location>
</feature>
<feature type="helix" evidence="13">
    <location>
        <begin position="335"/>
        <end position="337"/>
    </location>
</feature>
<feature type="helix" evidence="13">
    <location>
        <begin position="340"/>
        <end position="347"/>
    </location>
</feature>
<feature type="strand" evidence="13">
    <location>
        <begin position="352"/>
        <end position="354"/>
    </location>
</feature>
<feature type="helix" evidence="13">
    <location>
        <begin position="357"/>
        <end position="377"/>
    </location>
</feature>
<feature type="strand" evidence="13">
    <location>
        <begin position="379"/>
        <end position="381"/>
    </location>
</feature>
<feature type="helix" evidence="13">
    <location>
        <begin position="385"/>
        <end position="387"/>
    </location>
</feature>
<feature type="helix" evidence="13">
    <location>
        <begin position="388"/>
        <end position="406"/>
    </location>
</feature>
<feature type="helix" evidence="13">
    <location>
        <begin position="408"/>
        <end position="423"/>
    </location>
</feature>
<feature type="helix" evidence="13">
    <location>
        <begin position="430"/>
        <end position="432"/>
    </location>
</feature>
<feature type="turn" evidence="13">
    <location>
        <begin position="433"/>
        <end position="435"/>
    </location>
</feature>
<feature type="helix" evidence="13">
    <location>
        <begin position="436"/>
        <end position="468"/>
    </location>
</feature>
<feature type="helix" evidence="13">
    <location>
        <begin position="477"/>
        <end position="502"/>
    </location>
</feature>
<feature type="helix" evidence="13">
    <location>
        <begin position="508"/>
        <end position="539"/>
    </location>
</feature>
<sequence length="541" mass="58914">MSQLVECVPNFSEGNNQEVIDAISQAISQTPGCVLLDVDAGPSTNRTVYTFVGQPECVVEGALSAARTASQLIDMRKHKGEHPRMGALDVCPFIPVRGVSMDECVLCAKAFGQRLAEELNVPVYLYGEAAQMPSRQTLPAIRAGEYEALPEKLKQAEWVPDFGPSSFVPSWGATVTGARKFLIAFNINLLSTKEQAHRIALNLREQGRGKDQPGRLKKVQGIGWYLEEKNLAQVSTNLLDFEVTALHTVYEEARREAQELNLPVVGSQLVGLVPLKALLDAAAFYCDKEKLFVLEEEHRIRLVVNRLGLDSLAPFDPKERIIEYLVPDSGPEQSLLDASLRAFVREVGARSAAPGGGSVAAAVAALGAALASMVGQMTYGRRQFDHLDSTMRRLIPPFHAASAQLTSLVDADARAFAACLGAIKLPKNTPEERDRRTCALQEGLRQAVAVPLKLAETVSQLWPALQELAQCGNLSCLSDLQVAAKALETGVFGAYFNVLINLKDMTDDVFKEKTRHRISSLLQEAKTQAALVLGSLEARKE</sequence>
<comment type="function">
    <text evidence="8">Folate-dependent enzyme, that displays both transferase and deaminase activity. Serves to channel one-carbon units from formiminoglutamate to the folate pool.</text>
</comment>
<comment type="function">
    <text evidence="5">Binds and promotes bundling of vimentin filaments originating from the Golgi.</text>
</comment>
<comment type="catalytic activity">
    <reaction evidence="8">
        <text>5-formimidoyltetrahydrofolate + L-glutamate = N-formimidoyl-L-glutamate + (6S)-5,6,7,8-tetrahydrofolate</text>
        <dbReference type="Rhea" id="RHEA:15097"/>
        <dbReference type="ChEBI" id="CHEBI:29985"/>
        <dbReference type="ChEBI" id="CHEBI:57453"/>
        <dbReference type="ChEBI" id="CHEBI:57456"/>
        <dbReference type="ChEBI" id="CHEBI:58928"/>
        <dbReference type="EC" id="2.1.2.5"/>
    </reaction>
    <physiologicalReaction direction="right-to-left" evidence="11">
        <dbReference type="Rhea" id="RHEA:15099"/>
    </physiologicalReaction>
</comment>
<comment type="catalytic activity">
    <reaction evidence="8">
        <text>5-formimidoyltetrahydrofolate + 2 H(+) = (6R)-5,10-methenyltetrahydrofolate + NH4(+)</text>
        <dbReference type="Rhea" id="RHEA:22736"/>
        <dbReference type="ChEBI" id="CHEBI:15378"/>
        <dbReference type="ChEBI" id="CHEBI:28938"/>
        <dbReference type="ChEBI" id="CHEBI:57455"/>
        <dbReference type="ChEBI" id="CHEBI:57456"/>
        <dbReference type="EC" id="4.3.1.4"/>
    </reaction>
    <physiologicalReaction direction="left-to-right" evidence="11">
        <dbReference type="Rhea" id="RHEA:22737"/>
    </physiologicalReaction>
</comment>
<comment type="pathway">
    <text evidence="11">Amino-acid degradation; L-histidine degradation into L-glutamate; L-glutamate from N-formimidoyl-L-glutamate (transferase route): step 1/1.</text>
</comment>
<comment type="subunit">
    <text evidence="6 7">Homooctamer, including four polyglutamate binding sites. The subunits are arranged as a tetramer of dimers, and form a planar ring-shaped structure.</text>
</comment>
<comment type="subcellular location">
    <subcellularLocation>
        <location evidence="3">Cytoplasm</location>
        <location evidence="3">Cytosol</location>
    </subcellularLocation>
    <subcellularLocation>
        <location evidence="5 8">Golgi apparatus</location>
    </subcellularLocation>
    <subcellularLocation>
        <location evidence="2">Cytoplasm</location>
        <location evidence="2">Cytoskeleton</location>
        <location evidence="2">Microtubule organizing center</location>
        <location evidence="2">Centrosome</location>
        <location evidence="2">Centriole</location>
    </subcellularLocation>
    <text evidence="2">More abundantly located around the mother centriole.</text>
</comment>
<comment type="tissue specificity">
    <text evidence="8">Specifically expressed in liver (at protein level).</text>
</comment>
<comment type="similarity">
    <text evidence="9">In the C-terminal section; belongs to the cyclodeaminase/cyclohydrolase family.</text>
</comment>
<comment type="similarity">
    <text evidence="9">In the N-terminal section; belongs to the formiminotransferase family.</text>
</comment>
<evidence type="ECO:0000250" key="1"/>
<evidence type="ECO:0000250" key="2">
    <source>
        <dbReference type="UniProtKB" id="O95954"/>
    </source>
</evidence>
<evidence type="ECO:0000250" key="3">
    <source>
        <dbReference type="UniProtKB" id="Q9YH58"/>
    </source>
</evidence>
<evidence type="ECO:0000255" key="4"/>
<evidence type="ECO:0000269" key="5">
    <source>
    </source>
</evidence>
<evidence type="ECO:0000269" key="6">
    <source>
    </source>
</evidence>
<evidence type="ECO:0000269" key="7">
    <source>
    </source>
</evidence>
<evidence type="ECO:0000269" key="8">
    <source>
    </source>
</evidence>
<evidence type="ECO:0000305" key="9"/>
<evidence type="ECO:0000305" key="10">
    <source>
    </source>
</evidence>
<evidence type="ECO:0000305" key="11">
    <source>
    </source>
</evidence>
<evidence type="ECO:0007744" key="12">
    <source>
    </source>
</evidence>
<evidence type="ECO:0007829" key="13">
    <source>
        <dbReference type="PDB" id="2PFD"/>
    </source>
</evidence>
<protein>
    <recommendedName>
        <fullName evidence="11">Formimidoyltransferase-cyclodeaminase</fullName>
    </recommendedName>
    <alternativeName>
        <fullName>58 kDa microtubule-binding protein</fullName>
    </alternativeName>
    <alternativeName>
        <fullName>Formiminotransferase-cyclodeaminase</fullName>
        <shortName>FTCD</shortName>
    </alternativeName>
    <domain>
        <recommendedName>
            <fullName evidence="11">Glutamate formimidoyltransferase</fullName>
            <ecNumber evidence="8">2.1.2.5</ecNumber>
        </recommendedName>
        <alternativeName>
            <fullName>Glutamate formiminotransferase</fullName>
        </alternativeName>
        <alternativeName>
            <fullName>Glutamate formyltransferase</fullName>
        </alternativeName>
    </domain>
    <domain>
        <recommendedName>
            <fullName evidence="11">Formimidoyltetrahydrofolate cyclodeaminase</fullName>
            <ecNumber evidence="8">4.3.1.4</ecNumber>
        </recommendedName>
        <alternativeName>
            <fullName>Formiminotetrahydrofolate cyclodeaminase</fullName>
        </alternativeName>
    </domain>
</protein>
<keyword id="KW-0002">3D-structure</keyword>
<keyword id="KW-0963">Cytoplasm</keyword>
<keyword id="KW-0206">Cytoskeleton</keyword>
<keyword id="KW-0903">Direct protein sequencing</keyword>
<keyword id="KW-0290">Folate-binding</keyword>
<keyword id="KW-0333">Golgi apparatus</keyword>
<keyword id="KW-0369">Histidine metabolism</keyword>
<keyword id="KW-0456">Lyase</keyword>
<keyword id="KW-0511">Multifunctional enzyme</keyword>
<keyword id="KW-0597">Phosphoprotein</keyword>
<keyword id="KW-1185">Reference proteome</keyword>
<keyword id="KW-0808">Transferase</keyword>